<sequence length="103" mass="11705">MNEDPLFLACTRPAMFAGVTMEAMAFNVMATSILFILTSGFTMIGLGIGLHFVLREITKHDHNQFRVLFAWLNTRGKQKNLNRWGGGSTSPLRLIRTYEELNR</sequence>
<organism>
    <name type="scientific">Bartonella henselae (strain ATCC 49882 / DSM 28221 / CCUG 30454 / Houston 1)</name>
    <name type="common">Rochalimaea henselae</name>
    <dbReference type="NCBI Taxonomy" id="283166"/>
    <lineage>
        <taxon>Bacteria</taxon>
        <taxon>Pseudomonadati</taxon>
        <taxon>Pseudomonadota</taxon>
        <taxon>Alphaproteobacteria</taxon>
        <taxon>Hyphomicrobiales</taxon>
        <taxon>Bartonellaceae</taxon>
        <taxon>Bartonella</taxon>
    </lineage>
</organism>
<keyword id="KW-0998">Cell outer membrane</keyword>
<keyword id="KW-0472">Membrane</keyword>
<keyword id="KW-0812">Transmembrane</keyword>
<keyword id="KW-1133">Transmembrane helix</keyword>
<keyword id="KW-0813">Transport</keyword>
<keyword id="KW-0843">Virulence</keyword>
<gene>
    <name type="primary">virB3</name>
    <name type="ordered locus">BH13270</name>
</gene>
<evidence type="ECO:0000255" key="1"/>
<evidence type="ECO:0000269" key="2">
    <source>
    </source>
</evidence>
<evidence type="ECO:0000269" key="3">
    <source>
    </source>
</evidence>
<evidence type="ECO:0000269" key="4">
    <source>
    </source>
</evidence>
<evidence type="ECO:0000269" key="5">
    <source>
    </source>
</evidence>
<evidence type="ECO:0000305" key="6"/>
<accession>Q9S3N1</accession>
<accession>Q9RND3</accession>
<name>VIRB3_BARHE</name>
<proteinExistence type="evidence at protein level"/>
<protein>
    <recommendedName>
        <fullName>Type IV secretion system protein virB3</fullName>
    </recommendedName>
</protein>
<comment type="function">
    <text evidence="3 5">The type IV secretion system VirB/VirD4 is a major virulence determinant for subversion of human endothelial cell (HEC) function. VirB-dependent changes of HEC include massive cytoskeletal rearrangements, a pro-inflammatory activation by nuclear factor NF-kappa-B, inhibition of early and late events of apoptosis, leading to an increased cell survival, and, at high infection doses, a cytostatic or cytotoxic effect, which interferes with a potent VirB-independent mitogenic activity. These changes of HEC require the T4S coupling protein VirD4 and at least one of the effector proteins BepA-G. VirB3 may play a role in stabilization of pilus structure.</text>
</comment>
<comment type="subunit">
    <text evidence="4">Interacts with the 17 kDa antigen protein that is encoded within the virB locus.</text>
</comment>
<comment type="subcellular location">
    <subcellularLocation>
        <location evidence="6">Cell outer membrane</location>
        <topology evidence="6">Single-pass membrane protein</topology>
    </subcellularLocation>
</comment>
<comment type="induction">
    <text evidence="2">During the interaction with the intracellular environment of host cells.</text>
</comment>
<comment type="similarity">
    <text evidence="6">Belongs to the virB3 family.</text>
</comment>
<comment type="sequence caution" evidence="6">
    <conflict type="frameshift">
        <sequence resource="EMBL-CDS" id="AAF00941"/>
    </conflict>
</comment>
<reference key="1">
    <citation type="journal article" date="2000" name="DNA Cell Biol.">
        <title>Cloning, sequencing, and expression of three Bartonella henselae genes homologous to the Agrobacterium tumefaciens VirB region.</title>
        <authorList>
            <person name="Schmiederer M."/>
            <person name="Anderson B.E."/>
        </authorList>
    </citation>
    <scope>NUCLEOTIDE SEQUENCE [GENOMIC DNA]</scope>
    <source>
        <strain>ATCC 49882 / DSM 28221 / CCUG 30454 / Houston 1</strain>
    </source>
</reference>
<reference key="2">
    <citation type="journal article" date="2000" name="DNA Cell Biol.">
        <title>The gene encoding the 17-kDa antigen of Bartonella henselae is located within a cluster of genes homologous to the virB virulence operon.</title>
        <authorList>
            <person name="Padmalayam I."/>
            <person name="Karem K."/>
            <person name="Baumstark B.R."/>
            <person name="Massung R."/>
        </authorList>
    </citation>
    <scope>NUCLEOTIDE SEQUENCE [GENOMIC DNA]</scope>
    <source>
        <strain>ATCC 49882 / DSM 28221 / CCUG 30454 / Houston 1</strain>
    </source>
</reference>
<reference key="3">
    <citation type="journal article" date="2004" name="Proc. Natl. Acad. Sci. U.S.A.">
        <title>The louse-borne human pathogen Bartonella quintana is a genomic derivative of the zoonotic agent Bartonella henselae.</title>
        <authorList>
            <person name="Alsmark U.C.M."/>
            <person name="Frank A.C."/>
            <person name="Karlberg E.O."/>
            <person name="Legault B.-A."/>
            <person name="Ardell D.H."/>
            <person name="Canbaeck B."/>
            <person name="Eriksson A.-S."/>
            <person name="Naeslund A.K."/>
            <person name="Handley S.A."/>
            <person name="Huvet M."/>
            <person name="La Scola B."/>
            <person name="Holmberg M."/>
            <person name="Andersson S.G.E."/>
        </authorList>
    </citation>
    <scope>NUCLEOTIDE SEQUENCE [LARGE SCALE GENOMIC DNA]</scope>
    <source>
        <strain>ATCC 49882 / DSM 28221 / CCUG 30454 / Houston 1</strain>
    </source>
</reference>
<reference key="4">
    <citation type="journal article" date="2001" name="Infect. Immun.">
        <title>Intracellular induction of the Bartonella henselae virB operon by human endothelial cells.</title>
        <authorList>
            <person name="Schmiederer M."/>
            <person name="Arcenas R."/>
            <person name="Widen R."/>
            <person name="Valkov N."/>
            <person name="Anderson B.E."/>
        </authorList>
    </citation>
    <scope>INDUCTION</scope>
    <source>
        <strain>ATCC 49882 / DSM 28221 / CCUG 30454 / Houston 1</strain>
    </source>
</reference>
<reference key="5">
    <citation type="journal article" date="2004" name="J. Bacteriol.">
        <title>Interaction between protein subunits of the type IV secretion system of Bartonella henselae.</title>
        <authorList>
            <person name="Shamaei-Tousi A."/>
            <person name="Cahill R."/>
            <person name="Frankel G."/>
        </authorList>
    </citation>
    <scope>INTERACTION WITH 17 KDA ANTIGEN PROTEIN</scope>
</reference>
<reference key="6">
    <citation type="journal article" date="2004" name="Mol. Microbiol.">
        <title>The VirB type IV secretion system of Bartonella henselae mediates invasion, proinflammatory activation and antiapoptotic protection of endothelial cells.</title>
        <authorList>
            <person name="Schmid M.C."/>
            <person name="Schulein R."/>
            <person name="Dehio M."/>
            <person name="Denecker G."/>
            <person name="Carena I."/>
            <person name="Dehio C."/>
        </authorList>
    </citation>
    <scope>FUNCTION</scope>
    <source>
        <strain>ATCC 49882 / DSM 28221 / CCUG 30454 / Houston 1</strain>
    </source>
</reference>
<reference key="7">
    <citation type="journal article" date="2005" name="Proc. Natl. Acad. Sci. U.S.A.">
        <title>A bipartite signal mediates the transfer of type IV secretion substrates of Bartonella henselae into human cells.</title>
        <authorList>
            <person name="Schulein R."/>
            <person name="Guye P."/>
            <person name="Rhomberg T.A."/>
            <person name="Schmid M.C."/>
            <person name="Schroeder G."/>
            <person name="Vergunst A.C."/>
            <person name="Carena I."/>
            <person name="Dehio C."/>
        </authorList>
    </citation>
    <scope>FUNCTION</scope>
    <source>
        <strain>ATCC 49882 / DSM 28221 / CCUG 30454 / Houston 1</strain>
    </source>
</reference>
<feature type="chain" id="PRO_0000273256" description="Type IV secretion system protein virB3">
    <location>
        <begin position="1"/>
        <end position="103"/>
    </location>
</feature>
<feature type="transmembrane region" description="Helical" evidence="1">
    <location>
        <begin position="33"/>
        <end position="53"/>
    </location>
</feature>
<dbReference type="EMBL" id="U23447">
    <property type="protein sequence ID" value="AAD48920.1"/>
    <property type="molecule type" value="Genomic_DNA"/>
</dbReference>
<dbReference type="EMBL" id="AF182718">
    <property type="protein sequence ID" value="AAF00941.1"/>
    <property type="status" value="ALT_FRAME"/>
    <property type="molecule type" value="Genomic_DNA"/>
</dbReference>
<dbReference type="EMBL" id="BX897699">
    <property type="protein sequence ID" value="CAF28100.1"/>
    <property type="molecule type" value="Genomic_DNA"/>
</dbReference>
<dbReference type="RefSeq" id="WP_011181128.1">
    <property type="nucleotide sequence ID" value="NZ_LRIJ02000001.1"/>
</dbReference>
<dbReference type="SMR" id="Q9S3N1"/>
<dbReference type="PaxDb" id="283166-BH13270"/>
<dbReference type="EnsemblBacteria" id="CAF28100">
    <property type="protein sequence ID" value="CAF28100"/>
    <property type="gene ID" value="BH13270"/>
</dbReference>
<dbReference type="KEGG" id="bhe:BH13270"/>
<dbReference type="eggNOG" id="COG3702">
    <property type="taxonomic scope" value="Bacteria"/>
</dbReference>
<dbReference type="OrthoDB" id="9799932at2"/>
<dbReference type="Proteomes" id="UP000000421">
    <property type="component" value="Chromosome"/>
</dbReference>
<dbReference type="GO" id="GO:0009279">
    <property type="term" value="C:cell outer membrane"/>
    <property type="evidence" value="ECO:0007669"/>
    <property type="project" value="UniProtKB-SubCell"/>
</dbReference>
<dbReference type="InterPro" id="IPR007792">
    <property type="entry name" value="T4SS_VirB3/TrbD/AvhB"/>
</dbReference>
<dbReference type="Pfam" id="PF05101">
    <property type="entry name" value="VirB3"/>
    <property type="match status" value="1"/>
</dbReference>